<dbReference type="EC" id="2.7.7.6"/>
<dbReference type="EMBL" id="AJ416574">
    <property type="protein sequence ID" value="CAC95025.1"/>
    <property type="molecule type" value="Genomic_DNA"/>
</dbReference>
<dbReference type="SMR" id="Q8L6J2"/>
<dbReference type="STRING" id="4097.Q8L6J2"/>
<dbReference type="PaxDb" id="4097-Q8L6J2"/>
<dbReference type="Proteomes" id="UP000084051">
    <property type="component" value="Unplaced"/>
</dbReference>
<dbReference type="GO" id="GO:0034245">
    <property type="term" value="C:mitochondrial DNA-directed RNA polymerase complex"/>
    <property type="evidence" value="ECO:0000318"/>
    <property type="project" value="GO_Central"/>
</dbReference>
<dbReference type="GO" id="GO:0009536">
    <property type="term" value="C:plastid"/>
    <property type="evidence" value="ECO:0007669"/>
    <property type="project" value="GOC"/>
</dbReference>
<dbReference type="GO" id="GO:0003677">
    <property type="term" value="F:DNA binding"/>
    <property type="evidence" value="ECO:0007669"/>
    <property type="project" value="InterPro"/>
</dbReference>
<dbReference type="GO" id="GO:0003899">
    <property type="term" value="F:DNA-directed RNA polymerase activity"/>
    <property type="evidence" value="ECO:0000318"/>
    <property type="project" value="GO_Central"/>
</dbReference>
<dbReference type="GO" id="GO:0006390">
    <property type="term" value="P:mitochondrial transcription"/>
    <property type="evidence" value="ECO:0000318"/>
    <property type="project" value="GO_Central"/>
</dbReference>
<dbReference type="FunFam" id="1.10.150.20:FF:000027">
    <property type="entry name" value="DNA-directed RNA polymerase"/>
    <property type="match status" value="1"/>
</dbReference>
<dbReference type="Gene3D" id="1.10.150.20">
    <property type="entry name" value="5' to 3' exonuclease, C-terminal subdomain"/>
    <property type="match status" value="1"/>
</dbReference>
<dbReference type="InterPro" id="IPR046950">
    <property type="entry name" value="DNA-dir_Rpol_C_phage-type"/>
</dbReference>
<dbReference type="InterPro" id="IPR002092">
    <property type="entry name" value="DNA-dir_Rpol_phage-type"/>
</dbReference>
<dbReference type="InterPro" id="IPR043502">
    <property type="entry name" value="DNA/RNA_pol_sf"/>
</dbReference>
<dbReference type="PANTHER" id="PTHR10102">
    <property type="entry name" value="DNA-DIRECTED RNA POLYMERASE, MITOCHONDRIAL"/>
    <property type="match status" value="1"/>
</dbReference>
<dbReference type="PANTHER" id="PTHR10102:SF0">
    <property type="entry name" value="DNA-DIRECTED RNA POLYMERASE, MITOCHONDRIAL"/>
    <property type="match status" value="1"/>
</dbReference>
<dbReference type="Pfam" id="PF00940">
    <property type="entry name" value="RNA_pol"/>
    <property type="match status" value="1"/>
</dbReference>
<dbReference type="SUPFAM" id="SSF56672">
    <property type="entry name" value="DNA/RNA polymerases"/>
    <property type="match status" value="1"/>
</dbReference>
<dbReference type="PROSITE" id="PS00900">
    <property type="entry name" value="RNA_POL_PHAGE_1"/>
    <property type="match status" value="1"/>
</dbReference>
<dbReference type="PROSITE" id="PS00489">
    <property type="entry name" value="RNA_POL_PHAGE_2"/>
    <property type="match status" value="1"/>
</dbReference>
<organism>
    <name type="scientific">Nicotiana tabacum</name>
    <name type="common">Common tobacco</name>
    <dbReference type="NCBI Taxonomy" id="4097"/>
    <lineage>
        <taxon>Eukaryota</taxon>
        <taxon>Viridiplantae</taxon>
        <taxon>Streptophyta</taxon>
        <taxon>Embryophyta</taxon>
        <taxon>Tracheophyta</taxon>
        <taxon>Spermatophyta</taxon>
        <taxon>Magnoliopsida</taxon>
        <taxon>eudicotyledons</taxon>
        <taxon>Gunneridae</taxon>
        <taxon>Pentapetalae</taxon>
        <taxon>asterids</taxon>
        <taxon>lamiids</taxon>
        <taxon>Solanales</taxon>
        <taxon>Solanaceae</taxon>
        <taxon>Nicotianoideae</taxon>
        <taxon>Nicotianeae</taxon>
        <taxon>Nicotiana</taxon>
    </lineage>
</organism>
<name>RPO2A_TOBAC</name>
<comment type="function">
    <text>DNA-dependent RNA polymerase catalyzes the transcription of DNA into RNA using the four ribonucleoside triphosphates as substrates.</text>
</comment>
<comment type="catalytic activity">
    <reaction evidence="2 3">
        <text>RNA(n) + a ribonucleoside 5'-triphosphate = RNA(n+1) + diphosphate</text>
        <dbReference type="Rhea" id="RHEA:21248"/>
        <dbReference type="Rhea" id="RHEA-COMP:14527"/>
        <dbReference type="Rhea" id="RHEA-COMP:17342"/>
        <dbReference type="ChEBI" id="CHEBI:33019"/>
        <dbReference type="ChEBI" id="CHEBI:61557"/>
        <dbReference type="ChEBI" id="CHEBI:140395"/>
        <dbReference type="EC" id="2.7.7.6"/>
    </reaction>
</comment>
<comment type="similarity">
    <text evidence="4">Belongs to the phage and mitochondrial RNA polymerase family.</text>
</comment>
<evidence type="ECO:0000250" key="1"/>
<evidence type="ECO:0000255" key="2">
    <source>
        <dbReference type="PROSITE-ProRule" id="PRU10031"/>
    </source>
</evidence>
<evidence type="ECO:0000255" key="3">
    <source>
        <dbReference type="PROSITE-ProRule" id="PRU10032"/>
    </source>
</evidence>
<evidence type="ECO:0000305" key="4"/>
<feature type="chain" id="PRO_0000087752" description="DNA-directed RNA polymerase 2A">
    <location>
        <begin position="1" status="less than"/>
        <end position="332"/>
    </location>
</feature>
<feature type="active site" evidence="1">
    <location>
        <position position="33"/>
    </location>
</feature>
<feature type="active site" evidence="1">
    <location>
        <position position="108"/>
    </location>
</feature>
<feature type="active site" evidence="1">
    <location>
        <position position="265"/>
    </location>
</feature>
<feature type="non-terminal residue">
    <location>
        <position position="1"/>
    </location>
</feature>
<keyword id="KW-0240">DNA-directed RNA polymerase</keyword>
<keyword id="KW-0548">Nucleotidyltransferase</keyword>
<keyword id="KW-1185">Reference proteome</keyword>
<keyword id="KW-0804">Transcription</keyword>
<keyword id="KW-0808">Transferase</keyword>
<gene>
    <name type="primary">RPOT2-SYL</name>
</gene>
<reference key="1">
    <citation type="journal article" date="2002" name="Plant J.">
        <title>Six active phage-type RNA polymerase genes in Nicotiana tabacum.</title>
        <authorList>
            <person name="Hedtke B."/>
            <person name="Legen J."/>
            <person name="Weihe A."/>
            <person name="Herrmann R.G."/>
            <person name="Boerner T."/>
        </authorList>
    </citation>
    <scope>NUCLEOTIDE SEQUENCE [GENOMIC DNA]</scope>
</reference>
<protein>
    <recommendedName>
        <fullName>DNA-directed RNA polymerase 2A</fullName>
        <ecNumber>2.7.7.6</ecNumber>
    </recommendedName>
    <alternativeName>
        <fullName>NictaRpoT2-syl</fullName>
    </alternativeName>
    <alternativeName>
        <fullName>T7 bacteriophage-type single subunit RNA polymerase 2A</fullName>
    </alternativeName>
</protein>
<accession>Q8L6J2</accession>
<proteinExistence type="inferred from homology"/>
<sequence>DPFQCLAVCINLSEAVRSSSPETSVSHIPVHQDGSCNGLQHYAALGRDKLGAAAVNLVAGEKPADVYSGIAARVLDIMKRDAQRDPAEFPDAVRARVLVNQVDRKLVKQTVMTSVYGVTYIGARDQIKRRLKERGAIADDSELFGAACYAAKVTLTALGEMFEAARSIMTWLGECAKIIASENEPVRWTTPLGLPVVQPYRKIGRHLIKTSLQILTLQRETEKVMVKRQRTAFPPNFIHSLDGSHMMMTAVACRRAGLNFAGVHDSYWTHACDVDKLNRILREKFVELYEAPILEKLLESFQTSYPTLLFPPLPERGDFDMRDVLESPYFFN</sequence>